<sequence length="329" mass="36323">MTPVALDIAIHLAKIALIFFVVLTLAAYLVFAERRILAWIQDRKGPNRVGPFGLLQPLADLIKLLTKEDFRPAGADKWLFYLAPAMAAIPAILTFAVIPFGAPLTLFGREVPLQVADLNVGLLFFLALSSIAVYGVALGGWASNSKYALLGSIRGLAQLISYELSMGLSLVPTVMLAGSLRLSDIVAAQEGIWFIVYQPLAFVIFLISIAAECKRIPFDIPEAEGELVAGFHTEYSGMRFGLFFVGEYINIIVLGGLATTFFLGGWHGPWLPPFVWFSAKTLAFAFFFIWMRGTLPRLRYDQLMHLGWKVLTPLALVNILVTGWILMLR</sequence>
<accession>Q39ZB6</accession>
<gene>
    <name evidence="1" type="primary">nuoH1</name>
    <name type="ordered locus">Gmet_0161</name>
</gene>
<protein>
    <recommendedName>
        <fullName evidence="1">NADH-quinone oxidoreductase subunit H 1</fullName>
        <ecNumber evidence="1">7.1.1.-</ecNumber>
    </recommendedName>
    <alternativeName>
        <fullName evidence="1">NADH dehydrogenase I subunit H 1</fullName>
    </alternativeName>
    <alternativeName>
        <fullName evidence="1">NDH-1 subunit H 1</fullName>
    </alternativeName>
</protein>
<reference key="1">
    <citation type="journal article" date="2009" name="BMC Microbiol.">
        <title>The genome sequence of Geobacter metallireducens: features of metabolism, physiology and regulation common and dissimilar to Geobacter sulfurreducens.</title>
        <authorList>
            <person name="Aklujkar M."/>
            <person name="Krushkal J."/>
            <person name="DiBartolo G."/>
            <person name="Lapidus A."/>
            <person name="Land M.L."/>
            <person name="Lovley D.R."/>
        </authorList>
    </citation>
    <scope>NUCLEOTIDE SEQUENCE [LARGE SCALE GENOMIC DNA]</scope>
    <source>
        <strain>ATCC 53774 / DSM 7210 / GS-15</strain>
    </source>
</reference>
<feature type="chain" id="PRO_0000240074" description="NADH-quinone oxidoreductase subunit H 1">
    <location>
        <begin position="1"/>
        <end position="329"/>
    </location>
</feature>
<feature type="transmembrane region" description="Helical" evidence="1">
    <location>
        <begin position="12"/>
        <end position="32"/>
    </location>
</feature>
<feature type="transmembrane region" description="Helical" evidence="1">
    <location>
        <begin position="78"/>
        <end position="98"/>
    </location>
</feature>
<feature type="transmembrane region" description="Helical" evidence="1">
    <location>
        <begin position="120"/>
        <end position="140"/>
    </location>
</feature>
<feature type="transmembrane region" description="Helical" evidence="1">
    <location>
        <begin position="159"/>
        <end position="179"/>
    </location>
</feature>
<feature type="transmembrane region" description="Helical" evidence="1">
    <location>
        <begin position="191"/>
        <end position="211"/>
    </location>
</feature>
<feature type="transmembrane region" description="Helical" evidence="1">
    <location>
        <begin position="242"/>
        <end position="262"/>
    </location>
</feature>
<feature type="transmembrane region" description="Helical" evidence="1">
    <location>
        <begin position="270"/>
        <end position="290"/>
    </location>
</feature>
<feature type="transmembrane region" description="Helical" evidence="1">
    <location>
        <begin position="308"/>
        <end position="328"/>
    </location>
</feature>
<comment type="function">
    <text evidence="1">NDH-1 shuttles electrons from NADH, via FMN and iron-sulfur (Fe-S) centers, to quinones in the respiratory chain. The immediate electron acceptor for the enzyme in this species is believed to be ubiquinone. Couples the redox reaction to proton translocation (for every two electrons transferred, four hydrogen ions are translocated across the cytoplasmic membrane), and thus conserves the redox energy in a proton gradient. This subunit may bind ubiquinone.</text>
</comment>
<comment type="catalytic activity">
    <reaction evidence="1">
        <text>a quinone + NADH + 5 H(+)(in) = a quinol + NAD(+) + 4 H(+)(out)</text>
        <dbReference type="Rhea" id="RHEA:57888"/>
        <dbReference type="ChEBI" id="CHEBI:15378"/>
        <dbReference type="ChEBI" id="CHEBI:24646"/>
        <dbReference type="ChEBI" id="CHEBI:57540"/>
        <dbReference type="ChEBI" id="CHEBI:57945"/>
        <dbReference type="ChEBI" id="CHEBI:132124"/>
    </reaction>
</comment>
<comment type="subunit">
    <text evidence="1">NDH-1 is composed of 14 different subunits. Subunits NuoA, H, J, K, L, M, N constitute the membrane sector of the complex.</text>
</comment>
<comment type="subcellular location">
    <subcellularLocation>
        <location evidence="1">Cell inner membrane</location>
        <topology evidence="1">Multi-pass membrane protein</topology>
    </subcellularLocation>
</comment>
<comment type="similarity">
    <text evidence="1">Belongs to the complex I subunit 1 family.</text>
</comment>
<organism>
    <name type="scientific">Geobacter metallireducens (strain ATCC 53774 / DSM 7210 / GS-15)</name>
    <dbReference type="NCBI Taxonomy" id="269799"/>
    <lineage>
        <taxon>Bacteria</taxon>
        <taxon>Pseudomonadati</taxon>
        <taxon>Thermodesulfobacteriota</taxon>
        <taxon>Desulfuromonadia</taxon>
        <taxon>Geobacterales</taxon>
        <taxon>Geobacteraceae</taxon>
        <taxon>Geobacter</taxon>
    </lineage>
</organism>
<proteinExistence type="inferred from homology"/>
<keyword id="KW-0997">Cell inner membrane</keyword>
<keyword id="KW-1003">Cell membrane</keyword>
<keyword id="KW-0472">Membrane</keyword>
<keyword id="KW-0520">NAD</keyword>
<keyword id="KW-0874">Quinone</keyword>
<keyword id="KW-1185">Reference proteome</keyword>
<keyword id="KW-1278">Translocase</keyword>
<keyword id="KW-0812">Transmembrane</keyword>
<keyword id="KW-1133">Transmembrane helix</keyword>
<keyword id="KW-0830">Ubiquinone</keyword>
<name>NUOH1_GEOMG</name>
<dbReference type="EC" id="7.1.1.-" evidence="1"/>
<dbReference type="EMBL" id="CP000148">
    <property type="protein sequence ID" value="ABB30408.1"/>
    <property type="molecule type" value="Genomic_DNA"/>
</dbReference>
<dbReference type="SMR" id="Q39ZB6"/>
<dbReference type="STRING" id="269799.Gmet_0161"/>
<dbReference type="KEGG" id="gme:Gmet_0161"/>
<dbReference type="eggNOG" id="COG1005">
    <property type="taxonomic scope" value="Bacteria"/>
</dbReference>
<dbReference type="HOGENOM" id="CLU_015134_0_1_7"/>
<dbReference type="Proteomes" id="UP000007073">
    <property type="component" value="Chromosome"/>
</dbReference>
<dbReference type="GO" id="GO:0005886">
    <property type="term" value="C:plasma membrane"/>
    <property type="evidence" value="ECO:0007669"/>
    <property type="project" value="UniProtKB-SubCell"/>
</dbReference>
<dbReference type="GO" id="GO:0003954">
    <property type="term" value="F:NADH dehydrogenase activity"/>
    <property type="evidence" value="ECO:0007669"/>
    <property type="project" value="TreeGrafter"/>
</dbReference>
<dbReference type="GO" id="GO:0016655">
    <property type="term" value="F:oxidoreductase activity, acting on NAD(P)H, quinone or similar compound as acceptor"/>
    <property type="evidence" value="ECO:0007669"/>
    <property type="project" value="UniProtKB-UniRule"/>
</dbReference>
<dbReference type="GO" id="GO:0048038">
    <property type="term" value="F:quinone binding"/>
    <property type="evidence" value="ECO:0007669"/>
    <property type="project" value="UniProtKB-KW"/>
</dbReference>
<dbReference type="GO" id="GO:0009060">
    <property type="term" value="P:aerobic respiration"/>
    <property type="evidence" value="ECO:0007669"/>
    <property type="project" value="TreeGrafter"/>
</dbReference>
<dbReference type="HAMAP" id="MF_01350">
    <property type="entry name" value="NDH1_NuoH"/>
    <property type="match status" value="1"/>
</dbReference>
<dbReference type="InterPro" id="IPR001694">
    <property type="entry name" value="NADH_UbQ_OxRdtase_su1/FPO"/>
</dbReference>
<dbReference type="InterPro" id="IPR018086">
    <property type="entry name" value="NADH_UbQ_OxRdtase_su1_CS"/>
</dbReference>
<dbReference type="NCBIfam" id="NF004740">
    <property type="entry name" value="PRK06076.1-1"/>
    <property type="match status" value="1"/>
</dbReference>
<dbReference type="NCBIfam" id="NF004741">
    <property type="entry name" value="PRK06076.1-2"/>
    <property type="match status" value="1"/>
</dbReference>
<dbReference type="PANTHER" id="PTHR11432">
    <property type="entry name" value="NADH DEHYDROGENASE SUBUNIT 1"/>
    <property type="match status" value="1"/>
</dbReference>
<dbReference type="PANTHER" id="PTHR11432:SF3">
    <property type="entry name" value="NADH-UBIQUINONE OXIDOREDUCTASE CHAIN 1"/>
    <property type="match status" value="1"/>
</dbReference>
<dbReference type="Pfam" id="PF00146">
    <property type="entry name" value="NADHdh"/>
    <property type="match status" value="1"/>
</dbReference>
<dbReference type="PROSITE" id="PS00668">
    <property type="entry name" value="COMPLEX1_ND1_2"/>
    <property type="match status" value="1"/>
</dbReference>
<evidence type="ECO:0000255" key="1">
    <source>
        <dbReference type="HAMAP-Rule" id="MF_01350"/>
    </source>
</evidence>